<comment type="function">
    <text evidence="3">Putative N-acetyltransferase. May act on ribosomal proteins (Potential).</text>
</comment>
<comment type="subunit">
    <text evidence="2">Homohexamer, and homodimer.</text>
</comment>
<comment type="similarity">
    <text evidence="3">Belongs to the acetyltransferase family.</text>
</comment>
<keyword id="KW-0002">3D-structure</keyword>
<keyword id="KW-0012">Acyltransferase</keyword>
<keyword id="KW-1185">Reference proteome</keyword>
<keyword id="KW-0808">Transferase</keyword>
<sequence length="183" mass="21025">MFTCKVNEHITIRLLEPKDAERLAELIIQNQQRLGKWLFFAENPSSADTYRETIIPDWRRQYADLNGIEAGLLYDGSLCGMISLHNLDQVNRKAEIGYWIAKEFEGKGIITAACRKLITYAFEELELNRVAICAAVGNEKSRAVPERIGFLEEGKARDGLYVNGMHHDLVYYSLLKREWEGEK</sequence>
<proteinExistence type="evidence at protein level"/>
<accession>P96579</accession>
<accession>Q797M8</accession>
<organism>
    <name type="scientific">Bacillus subtilis (strain 168)</name>
    <dbReference type="NCBI Taxonomy" id="224308"/>
    <lineage>
        <taxon>Bacteria</taxon>
        <taxon>Bacillati</taxon>
        <taxon>Bacillota</taxon>
        <taxon>Bacilli</taxon>
        <taxon>Bacillales</taxon>
        <taxon>Bacillaceae</taxon>
        <taxon>Bacillus</taxon>
    </lineage>
</organism>
<protein>
    <recommendedName>
        <fullName>Putative ribosomal N-acetyltransferase YdaF</fullName>
        <ecNumber>2.3.1.-</ecNumber>
    </recommendedName>
</protein>
<reference key="1">
    <citation type="submission" date="1997-03" db="EMBL/GenBank/DDBJ databases">
        <title>A 148 kbp sequence of the region between 35 and 47 degree of the Bacillus subtilis genome.</title>
        <authorList>
            <person name="Kasahara Y."/>
            <person name="Nakai S."/>
            <person name="Lee S."/>
            <person name="Sadaie Y."/>
            <person name="Ogasawara N."/>
        </authorList>
    </citation>
    <scope>NUCLEOTIDE SEQUENCE [GENOMIC DNA]</scope>
    <source>
        <strain>168</strain>
    </source>
</reference>
<reference key="2">
    <citation type="journal article" date="1997" name="Nature">
        <title>The complete genome sequence of the Gram-positive bacterium Bacillus subtilis.</title>
        <authorList>
            <person name="Kunst F."/>
            <person name="Ogasawara N."/>
            <person name="Moszer I."/>
            <person name="Albertini A.M."/>
            <person name="Alloni G."/>
            <person name="Azevedo V."/>
            <person name="Bertero M.G."/>
            <person name="Bessieres P."/>
            <person name="Bolotin A."/>
            <person name="Borchert S."/>
            <person name="Borriss R."/>
            <person name="Boursier L."/>
            <person name="Brans A."/>
            <person name="Braun M."/>
            <person name="Brignell S.C."/>
            <person name="Bron S."/>
            <person name="Brouillet S."/>
            <person name="Bruschi C.V."/>
            <person name="Caldwell B."/>
            <person name="Capuano V."/>
            <person name="Carter N.M."/>
            <person name="Choi S.-K."/>
            <person name="Codani J.-J."/>
            <person name="Connerton I.F."/>
            <person name="Cummings N.J."/>
            <person name="Daniel R.A."/>
            <person name="Denizot F."/>
            <person name="Devine K.M."/>
            <person name="Duesterhoeft A."/>
            <person name="Ehrlich S.D."/>
            <person name="Emmerson P.T."/>
            <person name="Entian K.-D."/>
            <person name="Errington J."/>
            <person name="Fabret C."/>
            <person name="Ferrari E."/>
            <person name="Foulger D."/>
            <person name="Fritz C."/>
            <person name="Fujita M."/>
            <person name="Fujita Y."/>
            <person name="Fuma S."/>
            <person name="Galizzi A."/>
            <person name="Galleron N."/>
            <person name="Ghim S.-Y."/>
            <person name="Glaser P."/>
            <person name="Goffeau A."/>
            <person name="Golightly E.J."/>
            <person name="Grandi G."/>
            <person name="Guiseppi G."/>
            <person name="Guy B.J."/>
            <person name="Haga K."/>
            <person name="Haiech J."/>
            <person name="Harwood C.R."/>
            <person name="Henaut A."/>
            <person name="Hilbert H."/>
            <person name="Holsappel S."/>
            <person name="Hosono S."/>
            <person name="Hullo M.-F."/>
            <person name="Itaya M."/>
            <person name="Jones L.-M."/>
            <person name="Joris B."/>
            <person name="Karamata D."/>
            <person name="Kasahara Y."/>
            <person name="Klaerr-Blanchard M."/>
            <person name="Klein C."/>
            <person name="Kobayashi Y."/>
            <person name="Koetter P."/>
            <person name="Koningstein G."/>
            <person name="Krogh S."/>
            <person name="Kumano M."/>
            <person name="Kurita K."/>
            <person name="Lapidus A."/>
            <person name="Lardinois S."/>
            <person name="Lauber J."/>
            <person name="Lazarevic V."/>
            <person name="Lee S.-M."/>
            <person name="Levine A."/>
            <person name="Liu H."/>
            <person name="Masuda S."/>
            <person name="Mauel C."/>
            <person name="Medigue C."/>
            <person name="Medina N."/>
            <person name="Mellado R.P."/>
            <person name="Mizuno M."/>
            <person name="Moestl D."/>
            <person name="Nakai S."/>
            <person name="Noback M."/>
            <person name="Noone D."/>
            <person name="O'Reilly M."/>
            <person name="Ogawa K."/>
            <person name="Ogiwara A."/>
            <person name="Oudega B."/>
            <person name="Park S.-H."/>
            <person name="Parro V."/>
            <person name="Pohl T.M."/>
            <person name="Portetelle D."/>
            <person name="Porwollik S."/>
            <person name="Prescott A.M."/>
            <person name="Presecan E."/>
            <person name="Pujic P."/>
            <person name="Purnelle B."/>
            <person name="Rapoport G."/>
            <person name="Rey M."/>
            <person name="Reynolds S."/>
            <person name="Rieger M."/>
            <person name="Rivolta C."/>
            <person name="Rocha E."/>
            <person name="Roche B."/>
            <person name="Rose M."/>
            <person name="Sadaie Y."/>
            <person name="Sato T."/>
            <person name="Scanlan E."/>
            <person name="Schleich S."/>
            <person name="Schroeter R."/>
            <person name="Scoffone F."/>
            <person name="Sekiguchi J."/>
            <person name="Sekowska A."/>
            <person name="Seror S.J."/>
            <person name="Serror P."/>
            <person name="Shin B.-S."/>
            <person name="Soldo B."/>
            <person name="Sorokin A."/>
            <person name="Tacconi E."/>
            <person name="Takagi T."/>
            <person name="Takahashi H."/>
            <person name="Takemaru K."/>
            <person name="Takeuchi M."/>
            <person name="Tamakoshi A."/>
            <person name="Tanaka T."/>
            <person name="Terpstra P."/>
            <person name="Tognoni A."/>
            <person name="Tosato V."/>
            <person name="Uchiyama S."/>
            <person name="Vandenbol M."/>
            <person name="Vannier F."/>
            <person name="Vassarotti A."/>
            <person name="Viari A."/>
            <person name="Wambutt R."/>
            <person name="Wedler E."/>
            <person name="Wedler H."/>
            <person name="Weitzenegger T."/>
            <person name="Winters P."/>
            <person name="Wipat A."/>
            <person name="Yamamoto H."/>
            <person name="Yamane K."/>
            <person name="Yasumoto K."/>
            <person name="Yata K."/>
            <person name="Yoshida K."/>
            <person name="Yoshikawa H.-F."/>
            <person name="Zumstein E."/>
            <person name="Yoshikawa H."/>
            <person name="Danchin A."/>
        </authorList>
    </citation>
    <scope>NUCLEOTIDE SEQUENCE [LARGE SCALE GENOMIC DNA]</scope>
    <source>
        <strain>168</strain>
    </source>
</reference>
<reference key="3">
    <citation type="journal article" date="2004" name="Proteins">
        <title>Crystal structure of Bacillus subtilis YdaF protein: a putative ribosomal N-acetyltransferase.</title>
        <authorList>
            <person name="Brunzelle J.S."/>
            <person name="Wu R."/>
            <person name="Korolev S.V."/>
            <person name="Collart F.R."/>
            <person name="Joachimiak A."/>
            <person name="Anderson W.F."/>
        </authorList>
    </citation>
    <scope>X-RAY CRYSTALLOGRAPHY (2.7 ANGSTROMS)</scope>
    <scope>FUNCTION</scope>
    <scope>SUBUNIT</scope>
</reference>
<gene>
    <name type="primary">ydaF</name>
    <name type="ordered locus">BSU04210</name>
</gene>
<feature type="chain" id="PRO_0000360208" description="Putative ribosomal N-acetyltransferase YdaF">
    <location>
        <begin position="1"/>
        <end position="183"/>
    </location>
</feature>
<feature type="domain" description="N-acetyltransferase" evidence="1">
    <location>
        <begin position="10"/>
        <end position="176"/>
    </location>
</feature>
<feature type="strand" evidence="4">
    <location>
        <begin position="2"/>
        <end position="5"/>
    </location>
</feature>
<feature type="strand" evidence="4">
    <location>
        <begin position="7"/>
        <end position="13"/>
    </location>
</feature>
<feature type="helix" evidence="4">
    <location>
        <begin position="17"/>
        <end position="19"/>
    </location>
</feature>
<feature type="helix" evidence="4">
    <location>
        <begin position="20"/>
        <end position="28"/>
    </location>
</feature>
<feature type="turn" evidence="4">
    <location>
        <begin position="29"/>
        <end position="37"/>
    </location>
</feature>
<feature type="helix" evidence="4">
    <location>
        <begin position="47"/>
        <end position="52"/>
    </location>
</feature>
<feature type="helix" evidence="4">
    <location>
        <begin position="54"/>
        <end position="63"/>
    </location>
</feature>
<feature type="strand" evidence="4">
    <location>
        <begin position="68"/>
        <end position="74"/>
    </location>
</feature>
<feature type="strand" evidence="4">
    <location>
        <begin position="77"/>
        <end position="88"/>
    </location>
</feature>
<feature type="turn" evidence="4">
    <location>
        <begin position="89"/>
        <end position="92"/>
    </location>
</feature>
<feature type="strand" evidence="4">
    <location>
        <begin position="93"/>
        <end position="100"/>
    </location>
</feature>
<feature type="helix" evidence="4">
    <location>
        <begin position="102"/>
        <end position="104"/>
    </location>
</feature>
<feature type="helix" evidence="4">
    <location>
        <begin position="109"/>
        <end position="123"/>
    </location>
</feature>
<feature type="strand" evidence="4">
    <location>
        <begin position="128"/>
        <end position="135"/>
    </location>
</feature>
<feature type="helix" evidence="4">
    <location>
        <begin position="139"/>
        <end position="148"/>
    </location>
</feature>
<feature type="strand" evidence="4">
    <location>
        <begin position="151"/>
        <end position="162"/>
    </location>
</feature>
<feature type="strand" evidence="4">
    <location>
        <begin position="165"/>
        <end position="175"/>
    </location>
</feature>
<feature type="helix" evidence="4">
    <location>
        <begin position="176"/>
        <end position="178"/>
    </location>
</feature>
<name>YDAF_BACSU</name>
<dbReference type="EC" id="2.3.1.-"/>
<dbReference type="EMBL" id="AB001488">
    <property type="protein sequence ID" value="BAA19259.1"/>
    <property type="molecule type" value="Genomic_DNA"/>
</dbReference>
<dbReference type="EMBL" id="AL009126">
    <property type="protein sequence ID" value="CAB12228.1"/>
    <property type="molecule type" value="Genomic_DNA"/>
</dbReference>
<dbReference type="PIR" id="F69768">
    <property type="entry name" value="F69768"/>
</dbReference>
<dbReference type="RefSeq" id="NP_388302.1">
    <property type="nucleotide sequence ID" value="NC_000964.3"/>
</dbReference>
<dbReference type="RefSeq" id="WP_003246691.1">
    <property type="nucleotide sequence ID" value="NZ_OZ025638.1"/>
</dbReference>
<dbReference type="PDB" id="1NSL">
    <property type="method" value="X-ray"/>
    <property type="resolution" value="2.70 A"/>
    <property type="chains" value="A/B/C/D/E/F=1-183"/>
</dbReference>
<dbReference type="PDBsum" id="1NSL"/>
<dbReference type="SMR" id="P96579"/>
<dbReference type="FunCoup" id="P96579">
    <property type="interactions" value="10"/>
</dbReference>
<dbReference type="STRING" id="224308.BSU04210"/>
<dbReference type="PaxDb" id="224308-BSU04210"/>
<dbReference type="EnsemblBacteria" id="CAB12228">
    <property type="protein sequence ID" value="CAB12228"/>
    <property type="gene ID" value="BSU_04210"/>
</dbReference>
<dbReference type="GeneID" id="938250"/>
<dbReference type="KEGG" id="bsu:BSU04210"/>
<dbReference type="PATRIC" id="fig|224308.179.peg.447"/>
<dbReference type="eggNOG" id="COG1670">
    <property type="taxonomic scope" value="Bacteria"/>
</dbReference>
<dbReference type="InParanoid" id="P96579"/>
<dbReference type="OrthoDB" id="9784707at2"/>
<dbReference type="PhylomeDB" id="P96579"/>
<dbReference type="BioCyc" id="BSUB:BSU04210-MONOMER"/>
<dbReference type="EvolutionaryTrace" id="P96579"/>
<dbReference type="Proteomes" id="UP000001570">
    <property type="component" value="Chromosome"/>
</dbReference>
<dbReference type="GO" id="GO:0005737">
    <property type="term" value="C:cytoplasm"/>
    <property type="evidence" value="ECO:0000318"/>
    <property type="project" value="GO_Central"/>
</dbReference>
<dbReference type="GO" id="GO:1990189">
    <property type="term" value="F:protein N-terminal-serine acetyltransferase activity"/>
    <property type="evidence" value="ECO:0000318"/>
    <property type="project" value="GO_Central"/>
</dbReference>
<dbReference type="GO" id="GO:0008999">
    <property type="term" value="F:protein-N-terminal-alanine acetyltransferase activity"/>
    <property type="evidence" value="ECO:0000318"/>
    <property type="project" value="GO_Central"/>
</dbReference>
<dbReference type="CDD" id="cd04301">
    <property type="entry name" value="NAT_SF"/>
    <property type="match status" value="1"/>
</dbReference>
<dbReference type="Gene3D" id="3.40.630.30">
    <property type="match status" value="1"/>
</dbReference>
<dbReference type="InterPro" id="IPR016181">
    <property type="entry name" value="Acyl_CoA_acyltransferase"/>
</dbReference>
<dbReference type="InterPro" id="IPR000182">
    <property type="entry name" value="GNAT_dom"/>
</dbReference>
<dbReference type="InterPro" id="IPR051908">
    <property type="entry name" value="Ribosomal_N-acetyltransferase"/>
</dbReference>
<dbReference type="PANTHER" id="PTHR43441:SF12">
    <property type="entry name" value="RIBOSOMAL N-ACETYLTRANSFERASE YDAF-RELATED"/>
    <property type="match status" value="1"/>
</dbReference>
<dbReference type="PANTHER" id="PTHR43441">
    <property type="entry name" value="RIBOSOMAL-PROTEIN-SERINE ACETYLTRANSFERASE"/>
    <property type="match status" value="1"/>
</dbReference>
<dbReference type="Pfam" id="PF13302">
    <property type="entry name" value="Acetyltransf_3"/>
    <property type="match status" value="1"/>
</dbReference>
<dbReference type="SUPFAM" id="SSF55729">
    <property type="entry name" value="Acyl-CoA N-acyltransferases (Nat)"/>
    <property type="match status" value="1"/>
</dbReference>
<dbReference type="PROSITE" id="PS51186">
    <property type="entry name" value="GNAT"/>
    <property type="match status" value="1"/>
</dbReference>
<evidence type="ECO:0000255" key="1">
    <source>
        <dbReference type="PROSITE-ProRule" id="PRU00532"/>
    </source>
</evidence>
<evidence type="ECO:0000269" key="2">
    <source>
    </source>
</evidence>
<evidence type="ECO:0000305" key="3"/>
<evidence type="ECO:0007829" key="4">
    <source>
        <dbReference type="PDB" id="1NSL"/>
    </source>
</evidence>